<comment type="similarity">
    <text evidence="1">Belongs to the UPF0346 family.</text>
</comment>
<name>Y1421_STAAM</name>
<dbReference type="EMBL" id="BA000017">
    <property type="protein sequence ID" value="BAB57583.1"/>
    <property type="molecule type" value="Genomic_DNA"/>
</dbReference>
<dbReference type="RefSeq" id="WP_000801007.1">
    <property type="nucleotide sequence ID" value="NC_002758.2"/>
</dbReference>
<dbReference type="SMR" id="Q99U66"/>
<dbReference type="KEGG" id="sav:SAV1421"/>
<dbReference type="HOGENOM" id="CLU_177534_1_0_9"/>
<dbReference type="PhylomeDB" id="Q99U66"/>
<dbReference type="Proteomes" id="UP000002481">
    <property type="component" value="Chromosome"/>
</dbReference>
<dbReference type="Gene3D" id="1.10.150.260">
    <property type="entry name" value="YozE SAM-like"/>
    <property type="match status" value="1"/>
</dbReference>
<dbReference type="HAMAP" id="MF_01538">
    <property type="entry name" value="UPF0346"/>
    <property type="match status" value="1"/>
</dbReference>
<dbReference type="InterPro" id="IPR010673">
    <property type="entry name" value="UPF0346"/>
</dbReference>
<dbReference type="InterPro" id="IPR023089">
    <property type="entry name" value="YozE_SAM-like"/>
</dbReference>
<dbReference type="InterPro" id="IPR036806">
    <property type="entry name" value="YozE_SAM-like_sf"/>
</dbReference>
<dbReference type="NCBIfam" id="NF010193">
    <property type="entry name" value="PRK13672.1"/>
    <property type="match status" value="1"/>
</dbReference>
<dbReference type="Pfam" id="PF06855">
    <property type="entry name" value="YozE_SAM_like"/>
    <property type="match status" value="1"/>
</dbReference>
<dbReference type="PIRSF" id="PIRSF037262">
    <property type="entry name" value="UCP037262"/>
    <property type="match status" value="1"/>
</dbReference>
<dbReference type="SUPFAM" id="SSF140652">
    <property type="entry name" value="YozE-like"/>
    <property type="match status" value="1"/>
</dbReference>
<proteinExistence type="inferred from homology"/>
<reference key="1">
    <citation type="journal article" date="2001" name="Lancet">
        <title>Whole genome sequencing of meticillin-resistant Staphylococcus aureus.</title>
        <authorList>
            <person name="Kuroda M."/>
            <person name="Ohta T."/>
            <person name="Uchiyama I."/>
            <person name="Baba T."/>
            <person name="Yuzawa H."/>
            <person name="Kobayashi I."/>
            <person name="Cui L."/>
            <person name="Oguchi A."/>
            <person name="Aoki K."/>
            <person name="Nagai Y."/>
            <person name="Lian J.-Q."/>
            <person name="Ito T."/>
            <person name="Kanamori M."/>
            <person name="Matsumaru H."/>
            <person name="Maruyama A."/>
            <person name="Murakami H."/>
            <person name="Hosoyama A."/>
            <person name="Mizutani-Ui Y."/>
            <person name="Takahashi N.K."/>
            <person name="Sawano T."/>
            <person name="Inoue R."/>
            <person name="Kaito C."/>
            <person name="Sekimizu K."/>
            <person name="Hirakawa H."/>
            <person name="Kuhara S."/>
            <person name="Goto S."/>
            <person name="Yabuzaki J."/>
            <person name="Kanehisa M."/>
            <person name="Yamashita A."/>
            <person name="Oshima K."/>
            <person name="Furuya K."/>
            <person name="Yoshino C."/>
            <person name="Shiba T."/>
            <person name="Hattori M."/>
            <person name="Ogasawara N."/>
            <person name="Hayashi H."/>
            <person name="Hiramatsu K."/>
        </authorList>
    </citation>
    <scope>NUCLEOTIDE SEQUENCE [LARGE SCALE GENOMIC DNA]</scope>
    <source>
        <strain>Mu50 / ATCC 700699</strain>
    </source>
</reference>
<evidence type="ECO:0000255" key="1">
    <source>
        <dbReference type="HAMAP-Rule" id="MF_01538"/>
    </source>
</evidence>
<sequence>MKNYSFYQFVMTVRGRHDDKGRLAEEIFDDLAFPKHDDDFNILSDYIETHGDFTLPMSVFDDLYEEYTEWLKF</sequence>
<organism>
    <name type="scientific">Staphylococcus aureus (strain Mu50 / ATCC 700699)</name>
    <dbReference type="NCBI Taxonomy" id="158878"/>
    <lineage>
        <taxon>Bacteria</taxon>
        <taxon>Bacillati</taxon>
        <taxon>Bacillota</taxon>
        <taxon>Bacilli</taxon>
        <taxon>Bacillales</taxon>
        <taxon>Staphylococcaceae</taxon>
        <taxon>Staphylococcus</taxon>
    </lineage>
</organism>
<accession>Q99U66</accession>
<feature type="chain" id="PRO_0000164282" description="UPF0346 protein SAV1421">
    <location>
        <begin position="1"/>
        <end position="73"/>
    </location>
</feature>
<protein>
    <recommendedName>
        <fullName evidence="1">UPF0346 protein SAV1421</fullName>
    </recommendedName>
</protein>
<gene>
    <name type="ordered locus">SAV1421</name>
</gene>